<dbReference type="EC" id="6.1.1.12" evidence="1"/>
<dbReference type="EMBL" id="CP000671">
    <property type="protein sequence ID" value="ABQ97768.1"/>
    <property type="molecule type" value="Genomic_DNA"/>
</dbReference>
<dbReference type="SMR" id="A5UAG7"/>
<dbReference type="KEGG" id="hip:CGSHiEE_01440"/>
<dbReference type="HOGENOM" id="CLU_014330_3_2_6"/>
<dbReference type="GO" id="GO:0005737">
    <property type="term" value="C:cytoplasm"/>
    <property type="evidence" value="ECO:0007669"/>
    <property type="project" value="UniProtKB-SubCell"/>
</dbReference>
<dbReference type="GO" id="GO:0004815">
    <property type="term" value="F:aspartate-tRNA ligase activity"/>
    <property type="evidence" value="ECO:0007669"/>
    <property type="project" value="UniProtKB-UniRule"/>
</dbReference>
<dbReference type="GO" id="GO:0005524">
    <property type="term" value="F:ATP binding"/>
    <property type="evidence" value="ECO:0007669"/>
    <property type="project" value="UniProtKB-UniRule"/>
</dbReference>
<dbReference type="GO" id="GO:0003676">
    <property type="term" value="F:nucleic acid binding"/>
    <property type="evidence" value="ECO:0007669"/>
    <property type="project" value="InterPro"/>
</dbReference>
<dbReference type="GO" id="GO:0006422">
    <property type="term" value="P:aspartyl-tRNA aminoacylation"/>
    <property type="evidence" value="ECO:0007669"/>
    <property type="project" value="UniProtKB-UniRule"/>
</dbReference>
<dbReference type="CDD" id="cd00777">
    <property type="entry name" value="AspRS_core"/>
    <property type="match status" value="1"/>
</dbReference>
<dbReference type="CDD" id="cd04317">
    <property type="entry name" value="EcAspRS_like_N"/>
    <property type="match status" value="1"/>
</dbReference>
<dbReference type="FunFam" id="2.40.50.140:FF:000080">
    <property type="entry name" value="Aspartate--tRNA ligase"/>
    <property type="match status" value="1"/>
</dbReference>
<dbReference type="Gene3D" id="3.30.930.10">
    <property type="entry name" value="Bira Bifunctional Protein, Domain 2"/>
    <property type="match status" value="1"/>
</dbReference>
<dbReference type="Gene3D" id="3.30.1360.30">
    <property type="entry name" value="GAD-like domain"/>
    <property type="match status" value="1"/>
</dbReference>
<dbReference type="Gene3D" id="2.40.50.140">
    <property type="entry name" value="Nucleic acid-binding proteins"/>
    <property type="match status" value="1"/>
</dbReference>
<dbReference type="HAMAP" id="MF_00044">
    <property type="entry name" value="Asp_tRNA_synth_type1"/>
    <property type="match status" value="1"/>
</dbReference>
<dbReference type="InterPro" id="IPR004364">
    <property type="entry name" value="Aa-tRNA-synt_II"/>
</dbReference>
<dbReference type="InterPro" id="IPR006195">
    <property type="entry name" value="aa-tRNA-synth_II"/>
</dbReference>
<dbReference type="InterPro" id="IPR045864">
    <property type="entry name" value="aa-tRNA-synth_II/BPL/LPL"/>
</dbReference>
<dbReference type="InterPro" id="IPR004524">
    <property type="entry name" value="Asp-tRNA-ligase_1"/>
</dbReference>
<dbReference type="InterPro" id="IPR047089">
    <property type="entry name" value="Asp-tRNA-ligase_1_N"/>
</dbReference>
<dbReference type="InterPro" id="IPR002312">
    <property type="entry name" value="Asp/Asn-tRNA-synth_IIb"/>
</dbReference>
<dbReference type="InterPro" id="IPR047090">
    <property type="entry name" value="AspRS_core"/>
</dbReference>
<dbReference type="InterPro" id="IPR004115">
    <property type="entry name" value="GAD-like_sf"/>
</dbReference>
<dbReference type="InterPro" id="IPR029351">
    <property type="entry name" value="GAD_dom"/>
</dbReference>
<dbReference type="InterPro" id="IPR012340">
    <property type="entry name" value="NA-bd_OB-fold"/>
</dbReference>
<dbReference type="InterPro" id="IPR004365">
    <property type="entry name" value="NA-bd_OB_tRNA"/>
</dbReference>
<dbReference type="NCBIfam" id="TIGR00459">
    <property type="entry name" value="aspS_bact"/>
    <property type="match status" value="1"/>
</dbReference>
<dbReference type="NCBIfam" id="NF001750">
    <property type="entry name" value="PRK00476.1"/>
    <property type="match status" value="1"/>
</dbReference>
<dbReference type="PANTHER" id="PTHR22594:SF5">
    <property type="entry name" value="ASPARTATE--TRNA LIGASE, MITOCHONDRIAL"/>
    <property type="match status" value="1"/>
</dbReference>
<dbReference type="PANTHER" id="PTHR22594">
    <property type="entry name" value="ASPARTYL/LYSYL-TRNA SYNTHETASE"/>
    <property type="match status" value="1"/>
</dbReference>
<dbReference type="Pfam" id="PF02938">
    <property type="entry name" value="GAD"/>
    <property type="match status" value="1"/>
</dbReference>
<dbReference type="Pfam" id="PF00152">
    <property type="entry name" value="tRNA-synt_2"/>
    <property type="match status" value="1"/>
</dbReference>
<dbReference type="Pfam" id="PF01336">
    <property type="entry name" value="tRNA_anti-codon"/>
    <property type="match status" value="1"/>
</dbReference>
<dbReference type="PRINTS" id="PR01042">
    <property type="entry name" value="TRNASYNTHASP"/>
</dbReference>
<dbReference type="SUPFAM" id="SSF55681">
    <property type="entry name" value="Class II aaRS and biotin synthetases"/>
    <property type="match status" value="1"/>
</dbReference>
<dbReference type="SUPFAM" id="SSF55261">
    <property type="entry name" value="GAD domain-like"/>
    <property type="match status" value="1"/>
</dbReference>
<dbReference type="SUPFAM" id="SSF50249">
    <property type="entry name" value="Nucleic acid-binding proteins"/>
    <property type="match status" value="1"/>
</dbReference>
<dbReference type="PROSITE" id="PS50862">
    <property type="entry name" value="AA_TRNA_LIGASE_II"/>
    <property type="match status" value="1"/>
</dbReference>
<keyword id="KW-0030">Aminoacyl-tRNA synthetase</keyword>
<keyword id="KW-0067">ATP-binding</keyword>
<keyword id="KW-0963">Cytoplasm</keyword>
<keyword id="KW-0436">Ligase</keyword>
<keyword id="KW-0547">Nucleotide-binding</keyword>
<keyword id="KW-0648">Protein biosynthesis</keyword>
<sequence length="588" mass="66708">MMRTHYCGALNRNNIGQDVTLSGWVHRRRDLGGLIFIDMRDRDGIVQVCFDPKYQDALTAAAGLRNEFCIQIKGEVIARPENQINKNMATGEVEVLAKELRVYNASDVLPLDFNQNNTEEQRLKYRYLDLRRPEMAQRLKTRAKITSFVRRFMDDNGFLDIETPMLTKATPEGARDYLVPSRVHKGKFYALPQSPQLFKQLLMMSGFDRYYQIVKCFRDEDLRADRQPEFTQIDVETSFLTAPEVREIMERMVHGLWLDTIGVDLGKFPVMTWQEAMRRFGSDKPDLRNPLEIVDVADIVKDVEFKVFNEPANNPNGRVAVIRVPNGAEITRKQIDEYTQFVGIYGAKGLAWAKVNDINAGLEGVQSPIAKFLNEEVWKALAERVNAQTGDILFFGADKWQTTTDAMGALRLKLGRDLGLTRLDEWKPLWVIDFPMFERDEEGNLAAMHHPFTSPKDFSPEQLEADPTSAVANAYDMVINGYEVGGGSVRIFDPKMQQTVFRILGIDEEQQREKFGFLLDALKFGTPPHAGLAFGLDRLTMLLTGTENIRDVIAFPKTTAAACLMTEAPSFANPQALEELAIQVTKSE</sequence>
<protein>
    <recommendedName>
        <fullName evidence="1">Aspartate--tRNA ligase</fullName>
        <ecNumber evidence="1">6.1.1.12</ecNumber>
    </recommendedName>
    <alternativeName>
        <fullName evidence="1">Aspartyl-tRNA synthetase</fullName>
        <shortName evidence="1">AspRS</shortName>
    </alternativeName>
</protein>
<evidence type="ECO:0000255" key="1">
    <source>
        <dbReference type="HAMAP-Rule" id="MF_00044"/>
    </source>
</evidence>
<reference key="1">
    <citation type="journal article" date="2007" name="Genome Biol.">
        <title>Characterization and modeling of the Haemophilus influenzae core and supragenomes based on the complete genomic sequences of Rd and 12 clinical nontypeable strains.</title>
        <authorList>
            <person name="Hogg J.S."/>
            <person name="Hu F.Z."/>
            <person name="Janto B."/>
            <person name="Boissy R."/>
            <person name="Hayes J."/>
            <person name="Keefe R."/>
            <person name="Post J.C."/>
            <person name="Ehrlich G.D."/>
        </authorList>
    </citation>
    <scope>NUCLEOTIDE SEQUENCE [LARGE SCALE GENOMIC DNA]</scope>
    <source>
        <strain>PittEE</strain>
    </source>
</reference>
<gene>
    <name evidence="1" type="primary">aspS</name>
    <name type="ordered locus">CGSHiEE_01440</name>
</gene>
<accession>A5UAG7</accession>
<proteinExistence type="inferred from homology"/>
<comment type="function">
    <text evidence="1">Catalyzes the attachment of L-aspartate to tRNA(Asp) in a two-step reaction: L-aspartate is first activated by ATP to form Asp-AMP and then transferred to the acceptor end of tRNA(Asp).</text>
</comment>
<comment type="catalytic activity">
    <reaction evidence="1">
        <text>tRNA(Asp) + L-aspartate + ATP = L-aspartyl-tRNA(Asp) + AMP + diphosphate</text>
        <dbReference type="Rhea" id="RHEA:19649"/>
        <dbReference type="Rhea" id="RHEA-COMP:9660"/>
        <dbReference type="Rhea" id="RHEA-COMP:9678"/>
        <dbReference type="ChEBI" id="CHEBI:29991"/>
        <dbReference type="ChEBI" id="CHEBI:30616"/>
        <dbReference type="ChEBI" id="CHEBI:33019"/>
        <dbReference type="ChEBI" id="CHEBI:78442"/>
        <dbReference type="ChEBI" id="CHEBI:78516"/>
        <dbReference type="ChEBI" id="CHEBI:456215"/>
        <dbReference type="EC" id="6.1.1.12"/>
    </reaction>
</comment>
<comment type="subunit">
    <text evidence="1">Homodimer.</text>
</comment>
<comment type="subcellular location">
    <subcellularLocation>
        <location evidence="1">Cytoplasm</location>
    </subcellularLocation>
</comment>
<comment type="similarity">
    <text evidence="1">Belongs to the class-II aminoacyl-tRNA synthetase family. Type 1 subfamily.</text>
</comment>
<name>SYD_HAEIE</name>
<feature type="chain" id="PRO_1000006681" description="Aspartate--tRNA ligase">
    <location>
        <begin position="1"/>
        <end position="588"/>
    </location>
</feature>
<feature type="region of interest" description="Aspartate" evidence="1">
    <location>
        <begin position="196"/>
        <end position="199"/>
    </location>
</feature>
<feature type="binding site" evidence="1">
    <location>
        <position position="172"/>
    </location>
    <ligand>
        <name>L-aspartate</name>
        <dbReference type="ChEBI" id="CHEBI:29991"/>
    </ligand>
</feature>
<feature type="binding site" evidence="1">
    <location>
        <begin position="218"/>
        <end position="220"/>
    </location>
    <ligand>
        <name>ATP</name>
        <dbReference type="ChEBI" id="CHEBI:30616"/>
    </ligand>
</feature>
<feature type="binding site" evidence="1">
    <location>
        <position position="218"/>
    </location>
    <ligand>
        <name>L-aspartate</name>
        <dbReference type="ChEBI" id="CHEBI:29991"/>
    </ligand>
</feature>
<feature type="binding site" evidence="1">
    <location>
        <position position="227"/>
    </location>
    <ligand>
        <name>ATP</name>
        <dbReference type="ChEBI" id="CHEBI:30616"/>
    </ligand>
</feature>
<feature type="binding site" evidence="1">
    <location>
        <position position="449"/>
    </location>
    <ligand>
        <name>L-aspartate</name>
        <dbReference type="ChEBI" id="CHEBI:29991"/>
    </ligand>
</feature>
<feature type="binding site" evidence="1">
    <location>
        <position position="483"/>
    </location>
    <ligand>
        <name>ATP</name>
        <dbReference type="ChEBI" id="CHEBI:30616"/>
    </ligand>
</feature>
<feature type="binding site" evidence="1">
    <location>
        <position position="490"/>
    </location>
    <ligand>
        <name>L-aspartate</name>
        <dbReference type="ChEBI" id="CHEBI:29991"/>
    </ligand>
</feature>
<feature type="binding site" evidence="1">
    <location>
        <begin position="535"/>
        <end position="538"/>
    </location>
    <ligand>
        <name>ATP</name>
        <dbReference type="ChEBI" id="CHEBI:30616"/>
    </ligand>
</feature>
<organism>
    <name type="scientific">Haemophilus influenzae (strain PittEE)</name>
    <dbReference type="NCBI Taxonomy" id="374930"/>
    <lineage>
        <taxon>Bacteria</taxon>
        <taxon>Pseudomonadati</taxon>
        <taxon>Pseudomonadota</taxon>
        <taxon>Gammaproteobacteria</taxon>
        <taxon>Pasteurellales</taxon>
        <taxon>Pasteurellaceae</taxon>
        <taxon>Haemophilus</taxon>
    </lineage>
</organism>